<protein>
    <recommendedName>
        <fullName>C-phycoerythrin beta chain</fullName>
    </recommendedName>
</protein>
<keyword id="KW-0042">Antenna complex</keyword>
<keyword id="KW-0089">Bile pigment</keyword>
<keyword id="KW-0157">Chromophore</keyword>
<keyword id="KW-0903">Direct protein sequencing</keyword>
<keyword id="KW-0249">Electron transport</keyword>
<keyword id="KW-0472">Membrane</keyword>
<keyword id="KW-0488">Methylation</keyword>
<keyword id="KW-0602">Photosynthesis</keyword>
<keyword id="KW-0605">Phycobilisome</keyword>
<keyword id="KW-0793">Thylakoid</keyword>
<keyword id="KW-0813">Transport</keyword>
<dbReference type="EMBL" id="X04592">
    <property type="protein sequence ID" value="CAA28260.1"/>
    <property type="molecule type" value="Genomic_DNA"/>
</dbReference>
<dbReference type="SMR" id="P05097"/>
<dbReference type="iPTMnet" id="P05097"/>
<dbReference type="GO" id="GO:0030089">
    <property type="term" value="C:phycobilisome"/>
    <property type="evidence" value="ECO:0007669"/>
    <property type="project" value="UniProtKB-KW"/>
</dbReference>
<dbReference type="GO" id="GO:0031676">
    <property type="term" value="C:plasma membrane-derived thylakoid membrane"/>
    <property type="evidence" value="ECO:0007669"/>
    <property type="project" value="UniProtKB-SubCell"/>
</dbReference>
<dbReference type="GO" id="GO:0015979">
    <property type="term" value="P:photosynthesis"/>
    <property type="evidence" value="ECO:0007669"/>
    <property type="project" value="UniProtKB-KW"/>
</dbReference>
<dbReference type="Gene3D" id="1.10.490.20">
    <property type="entry name" value="Phycocyanins"/>
    <property type="match status" value="1"/>
</dbReference>
<dbReference type="InterPro" id="IPR009050">
    <property type="entry name" value="Globin-like_sf"/>
</dbReference>
<dbReference type="InterPro" id="IPR012128">
    <property type="entry name" value="Phycobilisome_asu/bsu"/>
</dbReference>
<dbReference type="InterPro" id="IPR038719">
    <property type="entry name" value="Phycobilisome_asu/bsu_sf"/>
</dbReference>
<dbReference type="PANTHER" id="PTHR34011:SF7">
    <property type="entry name" value="C-PHYCOCYANIN BETA SUBUNIT"/>
    <property type="match status" value="1"/>
</dbReference>
<dbReference type="PANTHER" id="PTHR34011">
    <property type="entry name" value="PHYCOBILISOME 32.1 KDA LINKER POLYPEPTIDE, PHYCOCYANIN-ASSOCIATED, ROD 2-RELATED"/>
    <property type="match status" value="1"/>
</dbReference>
<dbReference type="Pfam" id="PF00502">
    <property type="entry name" value="Phycobilisome"/>
    <property type="match status" value="1"/>
</dbReference>
<dbReference type="PIRSF" id="PIRSF000081">
    <property type="entry name" value="Phycocyanin"/>
    <property type="match status" value="1"/>
</dbReference>
<dbReference type="SUPFAM" id="SSF46458">
    <property type="entry name" value="Globin-like"/>
    <property type="match status" value="1"/>
</dbReference>
<name>PHEB_MICDP</name>
<feature type="chain" id="PRO_0000199190" description="C-phycoerythrin beta chain">
    <location>
        <begin position="1"/>
        <end position="184"/>
    </location>
</feature>
<feature type="binding site" description="covalent">
    <location>
        <position position="48"/>
    </location>
    <ligand>
        <name>(2R,3E)-phycoerythrobilin</name>
        <dbReference type="ChEBI" id="CHEBI:85276"/>
        <label>1</label>
    </ligand>
</feature>
<feature type="binding site" description="covalent">
    <location>
        <position position="59"/>
    </location>
    <ligand>
        <name>(2R,3E)-phycoerythrobilin</name>
        <dbReference type="ChEBI" id="CHEBI:85276"/>
        <label>1</label>
    </ligand>
</feature>
<feature type="binding site" description="covalent">
    <location>
        <position position="80"/>
    </location>
    <ligand>
        <name>(2R,3E)-phycoerythrobilin</name>
        <dbReference type="ChEBI" id="CHEBI:85276"/>
        <label>2</label>
    </ligand>
</feature>
<feature type="binding site" description="covalent">
    <location>
        <position position="165"/>
    </location>
    <ligand>
        <name>(2R,3E)-phycoerythrobilin</name>
        <dbReference type="ChEBI" id="CHEBI:85276"/>
        <label>3</label>
    </ligand>
</feature>
<feature type="modified residue" description="N4-methylasparagine" evidence="3 4">
    <location>
        <position position="70"/>
    </location>
</feature>
<feature type="sequence conflict" description="In Ref. 2; AA sequence." evidence="5" ref="2">
    <original>N</original>
    <variation>S</variation>
    <location>
        <position position="70"/>
    </location>
</feature>
<organism>
    <name type="scientific">Microchaete diplosiphon</name>
    <name type="common">Fremyella diplosiphon</name>
    <dbReference type="NCBI Taxonomy" id="1197"/>
    <lineage>
        <taxon>Bacteria</taxon>
        <taxon>Bacillati</taxon>
        <taxon>Cyanobacteriota</taxon>
        <taxon>Cyanophyceae</taxon>
        <taxon>Nostocales</taxon>
        <taxon>Rivulariaceae</taxon>
        <taxon>Microchaete</taxon>
    </lineage>
</organism>
<sequence length="184" mass="19238">MLDAFSRAVVSADASTSTVSDIAALRAFVASGNRRLDAVNAIASNASCMVSDAVAGMICENQGLIQAGGNCYPNRRMAACLRDAEIVLRYVTYALLAGDASVLDDRCLNGLKETYAALGVPTTSTVRAVQIMKAQAAAHIQDTPSEARAGAKLRKMGTPVVEDRCASLVAEASSYFDRVISALS</sequence>
<evidence type="ECO:0000250" key="1"/>
<evidence type="ECO:0000269" key="2">
    <source>
    </source>
</evidence>
<evidence type="ECO:0000269" key="3">
    <source>
    </source>
</evidence>
<evidence type="ECO:0000269" key="4">
    <source ref="3"/>
</evidence>
<evidence type="ECO:0000305" key="5"/>
<accession>P05097</accession>
<reference key="1">
    <citation type="journal article" date="1986" name="Nucleic Acids Res.">
        <title>Green light induces transcription of the phycoerythrin operon in the cyanobacterium Calothrix 7601.</title>
        <authorList>
            <person name="Mazel D."/>
            <person name="Guglielmi G."/>
            <person name="Houmard J."/>
            <person name="Sidler W."/>
            <person name="Bryant D.A."/>
            <person name="Tandeau de Marsac N."/>
        </authorList>
    </citation>
    <scope>NUCLEOTIDE SEQUENCE [GENOMIC DNA]</scope>
    <source>
        <strain>UTEX 481 / PCC 7601 / SAG 1410-2</strain>
    </source>
</reference>
<reference key="2">
    <citation type="journal article" date="1986" name="Biol. Chem. Hoppe-Seyler">
        <title>The complete amino-acid sequence of C-phycoerythrin from the cyanobacterium Fremyella diplosiphon.</title>
        <authorList>
            <person name="Sidler W."/>
            <person name="Kumpf B."/>
            <person name="Ruediger W."/>
            <person name="Zuber H."/>
        </authorList>
    </citation>
    <scope>PROTEIN SEQUENCE</scope>
    <scope>CHROMOPHORE BINDING AT CYS-48; CYS-59; CYS-80 AND CYS-165</scope>
</reference>
<reference key="3">
    <citation type="journal article" date="1987" name="FEBS Lett.">
        <title>Gamma-N-methylasparagine in phycobiliproteins from the cyanobacteria Mastigocladus laminosus and Calothrix.</title>
        <authorList>
            <person name="Ruembeli R."/>
            <person name="Suter F."/>
            <person name="Wirth M."/>
            <person name="Sidler W."/>
            <person name="Zuber H."/>
        </authorList>
    </citation>
    <scope>PROTEIN SEQUENCE OF 53-81</scope>
    <scope>METHYLATION AT ASN-70</scope>
</reference>
<reference key="4">
    <citation type="journal article" date="1987" name="J. Biol. Chem.">
        <title>Gamma-N-methylasparagine in phycobiliproteins. Occurrence, location, and biosynthesis.</title>
        <authorList>
            <person name="Klotz A.V."/>
            <person name="Glazer A.N."/>
        </authorList>
    </citation>
    <scope>METHYLATION AT ASN-70</scope>
</reference>
<reference key="5">
    <citation type="journal article" date="1991" name="Plant Cell">
        <title>Hormogonium Differentiation in the Cyanobacterium Calothrix: A Photoregulated Developmental Process.</title>
        <authorList>
            <person name="Damerval T."/>
            <person name="Guglielmi G."/>
            <person name="Houmard J."/>
            <person name="De Marsac N.T."/>
        </authorList>
    </citation>
    <scope>INDUCTION</scope>
    <source>
        <strain>UTEX 481 / PCC 7601 / SAG 1410-2</strain>
    </source>
</reference>
<comment type="function">
    <text>Light-harvesting photosynthetic bile pigment-protein from the phycobiliprotein complex.</text>
</comment>
<comment type="subunit">
    <text>Heterodimer of an alpha and a beta chain.</text>
</comment>
<comment type="subcellular location">
    <subcellularLocation>
        <location evidence="1">Cellular thylakoid membrane</location>
        <topology evidence="1">Peripheral membrane protein</topology>
        <orientation evidence="1">Cytoplasmic side</orientation>
    </subcellularLocation>
    <text evidence="1">Forms the periphery of the phycobilisome rod.</text>
</comment>
<comment type="induction">
    <text evidence="2">Transcribed during growth in green light.</text>
</comment>
<comment type="PTM">
    <text>Contains three covalently linked bilin chromophores.</text>
</comment>
<comment type="similarity">
    <text evidence="5">Belongs to the phycobiliprotein family.</text>
</comment>
<gene>
    <name type="primary">cpeB</name>
</gene>
<proteinExistence type="evidence at protein level"/>